<sequence>MIGIAIKPSKINEDIVDFGHFIGRYFDYYIIDAENEVIKDEEILERLEKISKVVMTVQAKRVDAFELLELYASYGFDLCVVLGNKQYLTEKERKFKNYRILDVIKEAMRCSRDIWVGIEGVESLVKDIVEEHNLIAYYLYGQECSINSKRAIYVPYATKINENALESMKGYLNRRKNYRGNWRDFILSLNDEESIERIKNNDIVVGYPIIPNKEEILNFVRCFSV</sequence>
<reference key="1">
    <citation type="journal article" date="1996" name="Science">
        <title>Complete genome sequence of the methanogenic archaeon, Methanococcus jannaschii.</title>
        <authorList>
            <person name="Bult C.J."/>
            <person name="White O."/>
            <person name="Olsen G.J."/>
            <person name="Zhou L."/>
            <person name="Fleischmann R.D."/>
            <person name="Sutton G.G."/>
            <person name="Blake J.A."/>
            <person name="FitzGerald L.M."/>
            <person name="Clayton R.A."/>
            <person name="Gocayne J.D."/>
            <person name="Kerlavage A.R."/>
            <person name="Dougherty B.A."/>
            <person name="Tomb J.-F."/>
            <person name="Adams M.D."/>
            <person name="Reich C.I."/>
            <person name="Overbeek R."/>
            <person name="Kirkness E.F."/>
            <person name="Weinstock K.G."/>
            <person name="Merrick J.M."/>
            <person name="Glodek A."/>
            <person name="Scott J.L."/>
            <person name="Geoghagen N.S.M."/>
            <person name="Weidman J.F."/>
            <person name="Fuhrmann J.L."/>
            <person name="Nguyen D."/>
            <person name="Utterback T.R."/>
            <person name="Kelley J.M."/>
            <person name="Peterson J.D."/>
            <person name="Sadow P.W."/>
            <person name="Hanna M.C."/>
            <person name="Cotton M.D."/>
            <person name="Roberts K.M."/>
            <person name="Hurst M.A."/>
            <person name="Kaine B.P."/>
            <person name="Borodovsky M."/>
            <person name="Klenk H.-P."/>
            <person name="Fraser C.M."/>
            <person name="Smith H.O."/>
            <person name="Woese C.R."/>
            <person name="Venter J.C."/>
        </authorList>
    </citation>
    <scope>NUCLEOTIDE SEQUENCE [LARGE SCALE GENOMIC DNA]</scope>
    <source>
        <strain>ATCC 43067 / DSM 2661 / JAL-1 / JCM 10045 / NBRC 100440</strain>
    </source>
</reference>
<gene>
    <name type="ordered locus">MJ1239</name>
</gene>
<accession>Q58636</accession>
<feature type="chain" id="PRO_0000107232" description="Uncharacterized protein MJ1239">
    <location>
        <begin position="1"/>
        <end position="225"/>
    </location>
</feature>
<proteinExistence type="predicted"/>
<keyword id="KW-1185">Reference proteome</keyword>
<name>Y1239_METJA</name>
<protein>
    <recommendedName>
        <fullName>Uncharacterized protein MJ1239</fullName>
    </recommendedName>
</protein>
<organism>
    <name type="scientific">Methanocaldococcus jannaschii (strain ATCC 43067 / DSM 2661 / JAL-1 / JCM 10045 / NBRC 100440)</name>
    <name type="common">Methanococcus jannaschii</name>
    <dbReference type="NCBI Taxonomy" id="243232"/>
    <lineage>
        <taxon>Archaea</taxon>
        <taxon>Methanobacteriati</taxon>
        <taxon>Methanobacteriota</taxon>
        <taxon>Methanomada group</taxon>
        <taxon>Methanococci</taxon>
        <taxon>Methanococcales</taxon>
        <taxon>Methanocaldococcaceae</taxon>
        <taxon>Methanocaldococcus</taxon>
    </lineage>
</organism>
<dbReference type="EMBL" id="L77117">
    <property type="protein sequence ID" value="AAB99244.1"/>
    <property type="molecule type" value="Genomic_DNA"/>
</dbReference>
<dbReference type="PIR" id="F64454">
    <property type="entry name" value="F64454"/>
</dbReference>
<dbReference type="RefSeq" id="WP_010870751.1">
    <property type="nucleotide sequence ID" value="NC_000909.1"/>
</dbReference>
<dbReference type="FunCoup" id="Q58636">
    <property type="interactions" value="9"/>
</dbReference>
<dbReference type="PaxDb" id="243232-MJ_1239"/>
<dbReference type="EnsemblBacteria" id="AAB99244">
    <property type="protein sequence ID" value="AAB99244"/>
    <property type="gene ID" value="MJ_1239"/>
</dbReference>
<dbReference type="GeneID" id="1452135"/>
<dbReference type="KEGG" id="mja:MJ_1239"/>
<dbReference type="eggNOG" id="arCOG05074">
    <property type="taxonomic scope" value="Archaea"/>
</dbReference>
<dbReference type="HOGENOM" id="CLU_1100981_0_0_2"/>
<dbReference type="InParanoid" id="Q58636"/>
<dbReference type="OrthoDB" id="59590at2157"/>
<dbReference type="Proteomes" id="UP000000805">
    <property type="component" value="Chromosome"/>
</dbReference>